<proteinExistence type="evidence at transcript level"/>
<sequence>MELLEEDLTCPICCCLFEDPRVLPCSHSFCKKCLEGILDGNRSPTWRPPFKCPTCRKETVHNGIASLQVNYSLRGIVEKYNRIRVMPRMSQCRVHSGQPLNIFCATDLKLICGFCATTGDHKGHKFCALEEAYEREKLAFEELFRVVEGWKGAEVHSCLESLESAKKKALERVSRDADRVSEYFDKLLRTLEHKRSEILSDLETLKLAVMQTFDPEINRLRSALEEQRRALNIAESFRSLSDPLTFLQQMQDFREKLRVIQGTPLPSRTDMDVSLSALQSFDVKEWDRVRLGQVDKLCAPYESSAYLSSLPPAAAPRFTRVMWRVVLVVCACLPALNFLPSDCLALSFQDKVVALGGFSLPSPGEIVRWLGFCWKEAASICTLLTELCRNCMLDLINTTSDFIS</sequence>
<protein>
    <recommendedName>
        <fullName>Tripartite motif-containing 13</fullName>
    </recommendedName>
</protein>
<reference key="1">
    <citation type="journal article" date="2013" name="Nature">
        <title>The zebrafish reference genome sequence and its relationship to the human genome.</title>
        <authorList>
            <person name="Howe K."/>
            <person name="Clark M.D."/>
            <person name="Torroja C.F."/>
            <person name="Torrance J."/>
            <person name="Berthelot C."/>
            <person name="Muffato M."/>
            <person name="Collins J.E."/>
            <person name="Humphray S."/>
            <person name="McLaren K."/>
            <person name="Matthews L."/>
            <person name="McLaren S."/>
            <person name="Sealy I."/>
            <person name="Caccamo M."/>
            <person name="Churcher C."/>
            <person name="Scott C."/>
            <person name="Barrett J.C."/>
            <person name="Koch R."/>
            <person name="Rauch G.J."/>
            <person name="White S."/>
            <person name="Chow W."/>
            <person name="Kilian B."/>
            <person name="Quintais L.T."/>
            <person name="Guerra-Assuncao J.A."/>
            <person name="Zhou Y."/>
            <person name="Gu Y."/>
            <person name="Yen J."/>
            <person name="Vogel J.H."/>
            <person name="Eyre T."/>
            <person name="Redmond S."/>
            <person name="Banerjee R."/>
            <person name="Chi J."/>
            <person name="Fu B."/>
            <person name="Langley E."/>
            <person name="Maguire S.F."/>
            <person name="Laird G.K."/>
            <person name="Lloyd D."/>
            <person name="Kenyon E."/>
            <person name="Donaldson S."/>
            <person name="Sehra H."/>
            <person name="Almeida-King J."/>
            <person name="Loveland J."/>
            <person name="Trevanion S."/>
            <person name="Jones M."/>
            <person name="Quail M."/>
            <person name="Willey D."/>
            <person name="Hunt A."/>
            <person name="Burton J."/>
            <person name="Sims S."/>
            <person name="McLay K."/>
            <person name="Plumb B."/>
            <person name="Davis J."/>
            <person name="Clee C."/>
            <person name="Oliver K."/>
            <person name="Clark R."/>
            <person name="Riddle C."/>
            <person name="Elliot D."/>
            <person name="Threadgold G."/>
            <person name="Harden G."/>
            <person name="Ware D."/>
            <person name="Begum S."/>
            <person name="Mortimore B."/>
            <person name="Kerry G."/>
            <person name="Heath P."/>
            <person name="Phillimore B."/>
            <person name="Tracey A."/>
            <person name="Corby N."/>
            <person name="Dunn M."/>
            <person name="Johnson C."/>
            <person name="Wood J."/>
            <person name="Clark S."/>
            <person name="Pelan S."/>
            <person name="Griffiths G."/>
            <person name="Smith M."/>
            <person name="Glithero R."/>
            <person name="Howden P."/>
            <person name="Barker N."/>
            <person name="Lloyd C."/>
            <person name="Stevens C."/>
            <person name="Harley J."/>
            <person name="Holt K."/>
            <person name="Panagiotidis G."/>
            <person name="Lovell J."/>
            <person name="Beasley H."/>
            <person name="Henderson C."/>
            <person name="Gordon D."/>
            <person name="Auger K."/>
            <person name="Wright D."/>
            <person name="Collins J."/>
            <person name="Raisen C."/>
            <person name="Dyer L."/>
            <person name="Leung K."/>
            <person name="Robertson L."/>
            <person name="Ambridge K."/>
            <person name="Leongamornlert D."/>
            <person name="McGuire S."/>
            <person name="Gilderthorp R."/>
            <person name="Griffiths C."/>
            <person name="Manthravadi D."/>
            <person name="Nichol S."/>
            <person name="Barker G."/>
            <person name="Whitehead S."/>
            <person name="Kay M."/>
            <person name="Brown J."/>
            <person name="Murnane C."/>
            <person name="Gray E."/>
            <person name="Humphries M."/>
            <person name="Sycamore N."/>
            <person name="Barker D."/>
            <person name="Saunders D."/>
            <person name="Wallis J."/>
            <person name="Babbage A."/>
            <person name="Hammond S."/>
            <person name="Mashreghi-Mohammadi M."/>
            <person name="Barr L."/>
            <person name="Martin S."/>
            <person name="Wray P."/>
            <person name="Ellington A."/>
            <person name="Matthews N."/>
            <person name="Ellwood M."/>
            <person name="Woodmansey R."/>
            <person name="Clark G."/>
            <person name="Cooper J."/>
            <person name="Tromans A."/>
            <person name="Grafham D."/>
            <person name="Skuce C."/>
            <person name="Pandian R."/>
            <person name="Andrews R."/>
            <person name="Harrison E."/>
            <person name="Kimberley A."/>
            <person name="Garnett J."/>
            <person name="Fosker N."/>
            <person name="Hall R."/>
            <person name="Garner P."/>
            <person name="Kelly D."/>
            <person name="Bird C."/>
            <person name="Palmer S."/>
            <person name="Gehring I."/>
            <person name="Berger A."/>
            <person name="Dooley C.M."/>
            <person name="Ersan-Urun Z."/>
            <person name="Eser C."/>
            <person name="Geiger H."/>
            <person name="Geisler M."/>
            <person name="Karotki L."/>
            <person name="Kirn A."/>
            <person name="Konantz J."/>
            <person name="Konantz M."/>
            <person name="Oberlander M."/>
            <person name="Rudolph-Geiger S."/>
            <person name="Teucke M."/>
            <person name="Lanz C."/>
            <person name="Raddatz G."/>
            <person name="Osoegawa K."/>
            <person name="Zhu B."/>
            <person name="Rapp A."/>
            <person name="Widaa S."/>
            <person name="Langford C."/>
            <person name="Yang F."/>
            <person name="Schuster S.C."/>
            <person name="Carter N.P."/>
            <person name="Harrow J."/>
            <person name="Ning Z."/>
            <person name="Herrero J."/>
            <person name="Searle S.M."/>
            <person name="Enright A."/>
            <person name="Geisler R."/>
            <person name="Plasterk R.H."/>
            <person name="Lee C."/>
            <person name="Westerfield M."/>
            <person name="de Jong P.J."/>
            <person name="Zon L.I."/>
            <person name="Postlethwait J.H."/>
            <person name="Nusslein-Volhard C."/>
            <person name="Hubbard T.J."/>
            <person name="Roest Crollius H."/>
            <person name="Rogers J."/>
            <person name="Stemple D.L."/>
        </authorList>
    </citation>
    <scope>NUCLEOTIDE SEQUENCE [LARGE SCALE GENOMIC DNA]</scope>
    <source>
        <strain>Tuebingen</strain>
    </source>
</reference>
<reference key="2">
    <citation type="submission" date="2005-05" db="EMBL/GenBank/DDBJ databases">
        <authorList>
            <consortium name="NIH - Zebrafish Gene Collection (ZGC) project"/>
        </authorList>
    </citation>
    <scope>NUCLEOTIDE SEQUENCE [LARGE SCALE MRNA]</scope>
</reference>
<feature type="chain" id="PRO_0000416765" description="Tripartite motif-containing 13">
    <location>
        <begin position="1"/>
        <end position="404"/>
    </location>
</feature>
<feature type="transmembrane region" description="Helical" evidence="2">
    <location>
        <begin position="102"/>
        <end position="119"/>
    </location>
</feature>
<feature type="zinc finger region" description="RING-type" evidence="4">
    <location>
        <begin position="10"/>
        <end position="56"/>
    </location>
</feature>
<feature type="zinc finger region" description="B box-type" evidence="3">
    <location>
        <begin position="87"/>
        <end position="129"/>
    </location>
</feature>
<feature type="coiled-coil region" evidence="2">
    <location>
        <begin position="186"/>
        <end position="236"/>
    </location>
</feature>
<feature type="binding site" evidence="3">
    <location>
        <position position="92"/>
    </location>
    <ligand>
        <name>Zn(2+)</name>
        <dbReference type="ChEBI" id="CHEBI:29105"/>
    </ligand>
</feature>
<feature type="binding site" evidence="3">
    <location>
        <position position="95"/>
    </location>
    <ligand>
        <name>Zn(2+)</name>
        <dbReference type="ChEBI" id="CHEBI:29105"/>
    </ligand>
</feature>
<feature type="binding site" evidence="3">
    <location>
        <position position="115"/>
    </location>
    <ligand>
        <name>Zn(2+)</name>
        <dbReference type="ChEBI" id="CHEBI:29105"/>
    </ligand>
</feature>
<feature type="binding site" evidence="3">
    <location>
        <position position="121"/>
    </location>
    <ligand>
        <name>Zn(2+)</name>
        <dbReference type="ChEBI" id="CHEBI:29105"/>
    </ligand>
</feature>
<dbReference type="EMBL" id="CU855930">
    <property type="status" value="NOT_ANNOTATED_CDS"/>
    <property type="molecule type" value="Genomic_DNA"/>
</dbReference>
<dbReference type="EMBL" id="BC095319">
    <property type="protein sequence ID" value="AAH95319.1"/>
    <property type="molecule type" value="mRNA"/>
</dbReference>
<dbReference type="RefSeq" id="NP_001018439.1">
    <property type="nucleotide sequence ID" value="NM_001020603.2"/>
</dbReference>
<dbReference type="RefSeq" id="XP_009303017.1">
    <property type="nucleotide sequence ID" value="XM_009304742.4"/>
</dbReference>
<dbReference type="SMR" id="Q503I2"/>
<dbReference type="FunCoup" id="Q503I2">
    <property type="interactions" value="552"/>
</dbReference>
<dbReference type="STRING" id="7955.ENSDARP00000013495"/>
<dbReference type="PaxDb" id="7955-ENSDARP00000013495"/>
<dbReference type="Ensembl" id="ENSDART00000183472">
    <property type="protein sequence ID" value="ENSDARP00000145510"/>
    <property type="gene ID" value="ENSDARG00000110876"/>
</dbReference>
<dbReference type="GeneID" id="553630"/>
<dbReference type="KEGG" id="dre:553630"/>
<dbReference type="AGR" id="ZFIN:ZDB-GENE-050522-516"/>
<dbReference type="CTD" id="10206"/>
<dbReference type="ZFIN" id="ZDB-GENE-050522-516">
    <property type="gene designation" value="trim13"/>
</dbReference>
<dbReference type="eggNOG" id="KOG2177">
    <property type="taxonomic scope" value="Eukaryota"/>
</dbReference>
<dbReference type="InParanoid" id="Q503I2"/>
<dbReference type="OrthoDB" id="6105938at2759"/>
<dbReference type="PhylomeDB" id="Q503I2"/>
<dbReference type="Reactome" id="R-DRE-3108214">
    <property type="pathway name" value="SUMOylation of DNA damage response and repair proteins"/>
</dbReference>
<dbReference type="Reactome" id="R-DRE-3134975">
    <property type="pathway name" value="Regulation of innate immune responses to cytosolic DNA"/>
</dbReference>
<dbReference type="Reactome" id="R-DRE-3232142">
    <property type="pathway name" value="SUMOylation of ubiquitinylation proteins"/>
</dbReference>
<dbReference type="Reactome" id="R-DRE-6804758">
    <property type="pathway name" value="Regulation of TP53 Activity through Acetylation"/>
</dbReference>
<dbReference type="Reactome" id="R-DRE-8934593">
    <property type="pathway name" value="Regulation of RUNX1 Expression and Activity"/>
</dbReference>
<dbReference type="UniPathway" id="UPA00143"/>
<dbReference type="ChiTaRS" id="trim13">
    <property type="organism name" value="zebrafish"/>
</dbReference>
<dbReference type="PRO" id="PR:Q503I2"/>
<dbReference type="Proteomes" id="UP000000437">
    <property type="component" value="Alternate scaffold 9"/>
</dbReference>
<dbReference type="Proteomes" id="UP000000437">
    <property type="component" value="Chromosome 9"/>
</dbReference>
<dbReference type="GO" id="GO:0005789">
    <property type="term" value="C:endoplasmic reticulum membrane"/>
    <property type="evidence" value="ECO:0007669"/>
    <property type="project" value="UniProtKB-SubCell"/>
</dbReference>
<dbReference type="GO" id="GO:0016874">
    <property type="term" value="F:ligase activity"/>
    <property type="evidence" value="ECO:0007669"/>
    <property type="project" value="UniProtKB-KW"/>
</dbReference>
<dbReference type="GO" id="GO:0061630">
    <property type="term" value="F:ubiquitin protein ligase activity"/>
    <property type="evidence" value="ECO:0000318"/>
    <property type="project" value="GO_Central"/>
</dbReference>
<dbReference type="GO" id="GO:0008270">
    <property type="term" value="F:zinc ion binding"/>
    <property type="evidence" value="ECO:0007669"/>
    <property type="project" value="UniProtKB-KW"/>
</dbReference>
<dbReference type="GO" id="GO:0016567">
    <property type="term" value="P:protein ubiquitination"/>
    <property type="evidence" value="ECO:0007669"/>
    <property type="project" value="UniProtKB-UniPathway"/>
</dbReference>
<dbReference type="CDD" id="cd19767">
    <property type="entry name" value="Bbox2_TRIM13_C-XI"/>
    <property type="match status" value="1"/>
</dbReference>
<dbReference type="CDD" id="cd16762">
    <property type="entry name" value="RING-HC_TRIM13_C-V"/>
    <property type="match status" value="1"/>
</dbReference>
<dbReference type="Gene3D" id="3.30.160.60">
    <property type="entry name" value="Classic Zinc Finger"/>
    <property type="match status" value="1"/>
</dbReference>
<dbReference type="Gene3D" id="3.30.40.10">
    <property type="entry name" value="Zinc/RING finger domain, C3HC4 (zinc finger)"/>
    <property type="match status" value="1"/>
</dbReference>
<dbReference type="InterPro" id="IPR047153">
    <property type="entry name" value="TRIM45/56/19-like"/>
</dbReference>
<dbReference type="InterPro" id="IPR027370">
    <property type="entry name" value="Znf-RING_euk"/>
</dbReference>
<dbReference type="InterPro" id="IPR000315">
    <property type="entry name" value="Znf_B-box"/>
</dbReference>
<dbReference type="InterPro" id="IPR001841">
    <property type="entry name" value="Znf_RING"/>
</dbReference>
<dbReference type="InterPro" id="IPR013083">
    <property type="entry name" value="Znf_RING/FYVE/PHD"/>
</dbReference>
<dbReference type="InterPro" id="IPR017907">
    <property type="entry name" value="Znf_RING_CS"/>
</dbReference>
<dbReference type="PANTHER" id="PTHR25462">
    <property type="entry name" value="BONUS, ISOFORM C-RELATED"/>
    <property type="match status" value="1"/>
</dbReference>
<dbReference type="PANTHER" id="PTHR25462:SF229">
    <property type="entry name" value="TRANSCRIPTION INTERMEDIARY FACTOR 1-BETA"/>
    <property type="match status" value="1"/>
</dbReference>
<dbReference type="Pfam" id="PF00643">
    <property type="entry name" value="zf-B_box"/>
    <property type="match status" value="1"/>
</dbReference>
<dbReference type="Pfam" id="PF13445">
    <property type="entry name" value="zf-RING_UBOX"/>
    <property type="match status" value="1"/>
</dbReference>
<dbReference type="SMART" id="SM00336">
    <property type="entry name" value="BBOX"/>
    <property type="match status" value="1"/>
</dbReference>
<dbReference type="SMART" id="SM00184">
    <property type="entry name" value="RING"/>
    <property type="match status" value="1"/>
</dbReference>
<dbReference type="SUPFAM" id="SSF57845">
    <property type="entry name" value="B-box zinc-binding domain"/>
    <property type="match status" value="1"/>
</dbReference>
<dbReference type="SUPFAM" id="SSF57850">
    <property type="entry name" value="RING/U-box"/>
    <property type="match status" value="1"/>
</dbReference>
<dbReference type="PROSITE" id="PS50119">
    <property type="entry name" value="ZF_BBOX"/>
    <property type="match status" value="1"/>
</dbReference>
<dbReference type="PROSITE" id="PS00518">
    <property type="entry name" value="ZF_RING_1"/>
    <property type="match status" value="1"/>
</dbReference>
<dbReference type="PROSITE" id="PS50089">
    <property type="entry name" value="ZF_RING_2"/>
    <property type="match status" value="1"/>
</dbReference>
<organism>
    <name type="scientific">Danio rerio</name>
    <name type="common">Zebrafish</name>
    <name type="synonym">Brachydanio rerio</name>
    <dbReference type="NCBI Taxonomy" id="7955"/>
    <lineage>
        <taxon>Eukaryota</taxon>
        <taxon>Metazoa</taxon>
        <taxon>Chordata</taxon>
        <taxon>Craniata</taxon>
        <taxon>Vertebrata</taxon>
        <taxon>Euteleostomi</taxon>
        <taxon>Actinopterygii</taxon>
        <taxon>Neopterygii</taxon>
        <taxon>Teleostei</taxon>
        <taxon>Ostariophysi</taxon>
        <taxon>Cypriniformes</taxon>
        <taxon>Danionidae</taxon>
        <taxon>Danioninae</taxon>
        <taxon>Danio</taxon>
    </lineage>
</organism>
<name>TRI13_DANRE</name>
<accession>Q503I2</accession>
<accession>F1R8C7</accession>
<gene>
    <name type="primary">trim13</name>
    <name type="ORF">zgc:110578</name>
</gene>
<comment type="function">
    <text evidence="1">E3 ubiquitin ligase involved in the retrotranslocation and turnover of membrane and secretory proteins from the ER through a set of processes named ER-associated degradation (ERAD). This process acts on misfolded proteins as well as in the regulated degradation of correctly folded proteins (By similarity).</text>
</comment>
<comment type="pathway">
    <text>Protein modification; protein ubiquitination.</text>
</comment>
<comment type="subcellular location">
    <subcellularLocation>
        <location evidence="1">Endoplasmic reticulum membrane</location>
        <topology evidence="1">Single-pass membrane protein</topology>
    </subcellularLocation>
    <text evidence="1">Also concentrates at the perinuclear endoplasmic reticulum.</text>
</comment>
<comment type="domain">
    <text evidence="1">The C-terminal transmembrane domain is indispensable for the localization to the ER.</text>
</comment>
<keyword id="KW-0175">Coiled coil</keyword>
<keyword id="KW-0256">Endoplasmic reticulum</keyword>
<keyword id="KW-0436">Ligase</keyword>
<keyword id="KW-0472">Membrane</keyword>
<keyword id="KW-0479">Metal-binding</keyword>
<keyword id="KW-1185">Reference proteome</keyword>
<keyword id="KW-0812">Transmembrane</keyword>
<keyword id="KW-1133">Transmembrane helix</keyword>
<keyword id="KW-0833">Ubl conjugation pathway</keyword>
<keyword id="KW-0862">Zinc</keyword>
<keyword id="KW-0863">Zinc-finger</keyword>
<evidence type="ECO:0000250" key="1"/>
<evidence type="ECO:0000255" key="2"/>
<evidence type="ECO:0000255" key="3">
    <source>
        <dbReference type="PROSITE-ProRule" id="PRU00024"/>
    </source>
</evidence>
<evidence type="ECO:0000255" key="4">
    <source>
        <dbReference type="PROSITE-ProRule" id="PRU00175"/>
    </source>
</evidence>